<accession>I1JLC8</accession>
<accession>P93165</accession>
<protein>
    <recommendedName>
        <fullName evidence="8">Protein SLE2</fullName>
    </recommendedName>
    <alternativeName>
        <fullName evidence="7">Em protein</fullName>
    </alternativeName>
    <alternativeName>
        <fullName evidence="6">Protein Glycine max physiologically mature 11</fullName>
    </alternativeName>
    <alternativeName>
        <fullName evidence="5">Protein GmD-19</fullName>
    </alternativeName>
    <alternativeName>
        <fullName evidence="8">Soybean group-1 late embryogenesis abundant protein 2</fullName>
    </alternativeName>
    <alternativeName>
        <fullName evidence="8">Soybean group-1 lea protein 2</fullName>
        <shortName evidence="8">Sle2</shortName>
    </alternativeName>
</protein>
<proteinExistence type="evidence at transcript level"/>
<name>SLE2_SOYBN</name>
<reference key="1">
    <citation type="online journal article" date="1997" name="Plant Gene Register">
        <title>Isolation and characterization of a cDNA encoding a Group I LEA protein (Accession No. U66317) from soybean 1.</title>
        <authorList>
            <person name="Burns W.C."/>
            <person name="Maitra N."/>
            <person name="Cushman J.C."/>
        </authorList>
        <locator>PGR97-016</locator>
    </citation>
    <scope>NUCLEOTIDE SEQUENCE [MRNA]</scope>
    <source>
        <strain>cv. Essex</strain>
        <tissue>Seed</tissue>
    </source>
</reference>
<reference key="2">
    <citation type="submission" date="1997-05" db="EMBL/GenBank/DDBJ databases">
        <title>Glycine max mRNA for Em protein.</title>
        <authorList>
            <person name="Hsu T.F."/>
            <person name="Tsai F.Y."/>
            <person name="Hsing Y.I."/>
            <person name="Chow T.Y."/>
        </authorList>
    </citation>
    <scope>NUCLEOTIDE SEQUENCE [MRNA]</scope>
    <source>
        <strain>cv. Shi-shi</strain>
        <tissue>Cotyledon</tissue>
    </source>
</reference>
<reference key="3">
    <citation type="journal article" date="1997" name="Theor. Appl. Genet.">
        <title>Cloning, mapping, and analyses of expression of the Em-like gene family in soybean [Glycine max (L). Merr.].</title>
        <authorList>
            <person name="Calvo E.S."/>
            <person name="Wurtle E.S."/>
            <person name="Shoemaker R.C."/>
        </authorList>
    </citation>
    <scope>NUCLEOTIDE SEQUENCE [GENOMIC DNA]</scope>
    <scope>TISSUE SPECIFICITY</scope>
    <scope>DEVELOPMENTAL STAGE</scope>
    <scope>INDUCTION BY DROUGHT</scope>
    <source>
        <strain>cv. Williams 82</strain>
    </source>
</reference>
<reference key="4">
    <citation type="journal article" date="2002" name="Plant Physiol.">
        <title>Temperature-induced extended helix/random coil transitions in a group 1 late embryogenesis-abundant protein from soybean.</title>
        <authorList>
            <person name="Soulages J.L."/>
            <person name="Kim K."/>
            <person name="Walters C."/>
            <person name="Cushman J.C."/>
        </authorList>
    </citation>
    <scope>STRUCTURE</scope>
</reference>
<reference key="5">
    <citation type="journal article" date="2012" name="Plant Sci.">
        <title>Functional studies of soybean (Glycine max L.) seed LEA proteins GmPM6, GmPM11, and GmPM30 by CD and FTIR spectroscopy.</title>
        <authorList>
            <person name="Shih M.D."/>
            <person name="Hsieh T.Y."/>
            <person name="Jian W.T."/>
            <person name="Wu M.T."/>
            <person name="Yang S.J."/>
            <person name="Hoekstra F.A."/>
            <person name="Hsing Y.I."/>
        </authorList>
    </citation>
    <scope>FUNCTION</scope>
</reference>
<sequence length="105" mass="11505">MASRQNNKQELDERARQGETVVPGGTGGKSLEAQQHLAEGRSKGGQTRKEQLGTEGYQEMGRKGGLSTVEKSGEERAQEEGIGIDESKFRTGNNKNQNQNEDQDK</sequence>
<comment type="function">
    <text evidence="3">Late embryogenesis abundant (LEA) protein interacting with non-reducing sugars and phospholipids.</text>
</comment>
<comment type="tissue specificity">
    <text evidence="4">In seeds, expressed in the embryonic axis and in the cotyledons. Not detected in leaves, stems or roots.</text>
</comment>
<comment type="developmental stage">
    <text evidence="4">Expressed during seed development, from 70 days after fertilization (daf) until full maturation and drying at 105 daf. Decreases rapidly after imbibition.</text>
</comment>
<comment type="induction">
    <text evidence="4">Down-regulated by drought in 30 days after fertilization seeds. Not regulated by drought in leaves, cotyledons, hypocotyls and roots.</text>
</comment>
<comment type="miscellaneous">
    <text evidence="2 3">Belongs to the 'natively unfolded proteins'. The drying rate significantly affected the structure of the protein.</text>
</comment>
<comment type="similarity">
    <text evidence="9">Belongs to the small hydrophilic plant seed protein family.</text>
</comment>
<organism evidence="10">
    <name type="scientific">Glycine max</name>
    <name type="common">Soybean</name>
    <name type="synonym">Glycine hispida</name>
    <dbReference type="NCBI Taxonomy" id="3847"/>
    <lineage>
        <taxon>Eukaryota</taxon>
        <taxon>Viridiplantae</taxon>
        <taxon>Streptophyta</taxon>
        <taxon>Embryophyta</taxon>
        <taxon>Tracheophyta</taxon>
        <taxon>Spermatophyta</taxon>
        <taxon>Magnoliopsida</taxon>
        <taxon>eudicotyledons</taxon>
        <taxon>Gunneridae</taxon>
        <taxon>Pentapetalae</taxon>
        <taxon>rosids</taxon>
        <taxon>fabids</taxon>
        <taxon>Fabales</taxon>
        <taxon>Fabaceae</taxon>
        <taxon>Papilionoideae</taxon>
        <taxon>50 kb inversion clade</taxon>
        <taxon>NPAAA clade</taxon>
        <taxon>indigoferoid/millettioid clade</taxon>
        <taxon>Phaseoleae</taxon>
        <taxon>Glycine</taxon>
        <taxon>Glycine subgen. Soja</taxon>
    </lineage>
</organism>
<feature type="chain" id="PRO_0000431230" description="Protein SLE2">
    <location>
        <begin position="1"/>
        <end position="105"/>
    </location>
</feature>
<feature type="region of interest" description="Disordered" evidence="1">
    <location>
        <begin position="1"/>
        <end position="105"/>
    </location>
</feature>
<feature type="compositionally biased region" description="Basic and acidic residues" evidence="1">
    <location>
        <begin position="7"/>
        <end position="17"/>
    </location>
</feature>
<feature type="compositionally biased region" description="Basic and acidic residues" evidence="1">
    <location>
        <begin position="38"/>
        <end position="52"/>
    </location>
</feature>
<feature type="compositionally biased region" description="Basic and acidic residues" evidence="1">
    <location>
        <begin position="71"/>
        <end position="89"/>
    </location>
</feature>
<feature type="compositionally biased region" description="Low complexity" evidence="1">
    <location>
        <begin position="93"/>
        <end position="105"/>
    </location>
</feature>
<feature type="sequence conflict" description="In Ref. 1; AAB68027 and 2; AAB71224." ref="1 2">
    <original>E</original>
    <variation>D</variation>
    <location>
        <position position="70"/>
    </location>
</feature>
<gene>
    <name type="primary">SLE2</name>
    <name evidence="5" type="synonym">GmD-19</name>
    <name evidence="6" type="synonym">GmPM11</name>
    <name type="ordered locus">Glyma03g07470.1</name>
</gene>
<keyword id="KW-1185">Reference proteome</keyword>
<evidence type="ECO:0000256" key="1">
    <source>
        <dbReference type="SAM" id="MobiDB-lite"/>
    </source>
</evidence>
<evidence type="ECO:0000269" key="2">
    <source>
    </source>
</evidence>
<evidence type="ECO:0000269" key="3">
    <source>
    </source>
</evidence>
<evidence type="ECO:0000269" key="4">
    <source ref="3"/>
</evidence>
<evidence type="ECO:0000303" key="5">
    <source>
    </source>
</evidence>
<evidence type="ECO:0000303" key="6">
    <source>
    </source>
</evidence>
<evidence type="ECO:0000303" key="7">
    <source ref="2"/>
</evidence>
<evidence type="ECO:0000303" key="8">
    <source ref="3"/>
</evidence>
<evidence type="ECO:0000305" key="9"/>
<evidence type="ECO:0000312" key="10">
    <source>
        <dbReference type="Proteomes" id="UP000008827"/>
    </source>
</evidence>
<dbReference type="EMBL" id="U66317">
    <property type="protein sequence ID" value="AAB68027.1"/>
    <property type="molecule type" value="mRNA"/>
</dbReference>
<dbReference type="EMBL" id="AF004805">
    <property type="protein sequence ID" value="AAB71224.1"/>
    <property type="molecule type" value="mRNA"/>
</dbReference>
<dbReference type="PIR" id="T07087">
    <property type="entry name" value="T07087"/>
</dbReference>
<dbReference type="RefSeq" id="NP_001237287.1">
    <property type="nucleotide sequence ID" value="NM_001250358.1"/>
</dbReference>
<dbReference type="FunCoup" id="I1JLC8">
    <property type="interactions" value="187"/>
</dbReference>
<dbReference type="STRING" id="3847.I1JLC8"/>
<dbReference type="PaxDb" id="3847-GLYMA03G07470.1"/>
<dbReference type="EnsemblPlants" id="KRH65706">
    <property type="protein sequence ID" value="KRH65706"/>
    <property type="gene ID" value="GLYMA_03G056000"/>
</dbReference>
<dbReference type="GeneID" id="547493"/>
<dbReference type="Gramene" id="KRH65706">
    <property type="protein sequence ID" value="KRH65706"/>
    <property type="gene ID" value="GLYMA_03G056000"/>
</dbReference>
<dbReference type="KEGG" id="gmx:547493"/>
<dbReference type="eggNOG" id="ENOG502S40U">
    <property type="taxonomic scope" value="Eukaryota"/>
</dbReference>
<dbReference type="HOGENOM" id="CLU_144393_0_0_1"/>
<dbReference type="InParanoid" id="I1JLC8"/>
<dbReference type="OMA" id="DESKFRM"/>
<dbReference type="OrthoDB" id="540492at2759"/>
<dbReference type="Proteomes" id="UP000008827">
    <property type="component" value="Chromosome 3"/>
</dbReference>
<dbReference type="GO" id="GO:0050821">
    <property type="term" value="P:protein stabilization"/>
    <property type="evidence" value="ECO:0000314"/>
    <property type="project" value="CAFA"/>
</dbReference>
<dbReference type="GO" id="GO:0009737">
    <property type="term" value="P:response to abscisic acid"/>
    <property type="evidence" value="ECO:0000318"/>
    <property type="project" value="GO_Central"/>
</dbReference>
<dbReference type="DisProt" id="DP01036"/>
<dbReference type="InterPro" id="IPR038956">
    <property type="entry name" value="LEA_5"/>
</dbReference>
<dbReference type="InterPro" id="IPR022377">
    <property type="entry name" value="Sm_Hydphi_plant_seed_CS"/>
</dbReference>
<dbReference type="InterPro" id="IPR000389">
    <property type="entry name" value="Small_hydrophilic_seed_prot"/>
</dbReference>
<dbReference type="PANTHER" id="PTHR34671">
    <property type="entry name" value="EM-LIKE PROTEIN GEA1"/>
    <property type="match status" value="1"/>
</dbReference>
<dbReference type="PANTHER" id="PTHR34671:SF11">
    <property type="entry name" value="EM-LIKE PROTEIN GEA1"/>
    <property type="match status" value="1"/>
</dbReference>
<dbReference type="Pfam" id="PF00477">
    <property type="entry name" value="LEA_5"/>
    <property type="match status" value="1"/>
</dbReference>
<dbReference type="PROSITE" id="PS00431">
    <property type="entry name" value="SMALL_HYDR_PLANT_SEED"/>
    <property type="match status" value="1"/>
</dbReference>